<dbReference type="EC" id="6.3.5.7" evidence="1"/>
<dbReference type="EMBL" id="CP000848">
    <property type="protein sequence ID" value="ABV75802.1"/>
    <property type="molecule type" value="Genomic_DNA"/>
</dbReference>
<dbReference type="RefSeq" id="WP_012150409.1">
    <property type="nucleotide sequence ID" value="NZ_CP121767.1"/>
</dbReference>
<dbReference type="SMR" id="A8GQX7"/>
<dbReference type="GeneID" id="79936986"/>
<dbReference type="KEGG" id="rri:A1G_01100"/>
<dbReference type="HOGENOM" id="CLU_009600_0_3_5"/>
<dbReference type="Proteomes" id="UP000006832">
    <property type="component" value="Chromosome"/>
</dbReference>
<dbReference type="GO" id="GO:0030956">
    <property type="term" value="C:glutamyl-tRNA(Gln) amidotransferase complex"/>
    <property type="evidence" value="ECO:0007669"/>
    <property type="project" value="InterPro"/>
</dbReference>
<dbReference type="GO" id="GO:0005524">
    <property type="term" value="F:ATP binding"/>
    <property type="evidence" value="ECO:0007669"/>
    <property type="project" value="UniProtKB-KW"/>
</dbReference>
<dbReference type="GO" id="GO:0050567">
    <property type="term" value="F:glutaminyl-tRNA synthase (glutamine-hydrolyzing) activity"/>
    <property type="evidence" value="ECO:0007669"/>
    <property type="project" value="UniProtKB-UniRule"/>
</dbReference>
<dbReference type="GO" id="GO:0006412">
    <property type="term" value="P:translation"/>
    <property type="evidence" value="ECO:0007669"/>
    <property type="project" value="UniProtKB-UniRule"/>
</dbReference>
<dbReference type="Gene3D" id="3.90.1300.10">
    <property type="entry name" value="Amidase signature (AS) domain"/>
    <property type="match status" value="1"/>
</dbReference>
<dbReference type="HAMAP" id="MF_00120">
    <property type="entry name" value="GatA"/>
    <property type="match status" value="1"/>
</dbReference>
<dbReference type="InterPro" id="IPR000120">
    <property type="entry name" value="Amidase"/>
</dbReference>
<dbReference type="InterPro" id="IPR020556">
    <property type="entry name" value="Amidase_CS"/>
</dbReference>
<dbReference type="InterPro" id="IPR023631">
    <property type="entry name" value="Amidase_dom"/>
</dbReference>
<dbReference type="InterPro" id="IPR036928">
    <property type="entry name" value="AS_sf"/>
</dbReference>
<dbReference type="InterPro" id="IPR004412">
    <property type="entry name" value="GatA"/>
</dbReference>
<dbReference type="NCBIfam" id="TIGR00132">
    <property type="entry name" value="gatA"/>
    <property type="match status" value="1"/>
</dbReference>
<dbReference type="PANTHER" id="PTHR11895:SF151">
    <property type="entry name" value="GLUTAMYL-TRNA(GLN) AMIDOTRANSFERASE SUBUNIT A"/>
    <property type="match status" value="1"/>
</dbReference>
<dbReference type="PANTHER" id="PTHR11895">
    <property type="entry name" value="TRANSAMIDASE"/>
    <property type="match status" value="1"/>
</dbReference>
<dbReference type="Pfam" id="PF01425">
    <property type="entry name" value="Amidase"/>
    <property type="match status" value="1"/>
</dbReference>
<dbReference type="SUPFAM" id="SSF75304">
    <property type="entry name" value="Amidase signature (AS) enzymes"/>
    <property type="match status" value="1"/>
</dbReference>
<dbReference type="PROSITE" id="PS00571">
    <property type="entry name" value="AMIDASES"/>
    <property type="match status" value="1"/>
</dbReference>
<feature type="chain" id="PRO_1000015900" description="Glutamyl-tRNA(Gln) amidotransferase subunit A">
    <location>
        <begin position="1"/>
        <end position="493"/>
    </location>
</feature>
<feature type="active site" description="Charge relay system" evidence="1">
    <location>
        <position position="78"/>
    </location>
</feature>
<feature type="active site" description="Charge relay system" evidence="1">
    <location>
        <position position="158"/>
    </location>
</feature>
<feature type="active site" description="Acyl-ester intermediate" evidence="1">
    <location>
        <position position="182"/>
    </location>
</feature>
<comment type="function">
    <text evidence="1">Allows the formation of correctly charged Gln-tRNA(Gln) through the transamidation of misacylated Glu-tRNA(Gln) in organisms which lack glutaminyl-tRNA synthetase. The reaction takes place in the presence of glutamine and ATP through an activated gamma-phospho-Glu-tRNA(Gln).</text>
</comment>
<comment type="catalytic activity">
    <reaction evidence="1">
        <text>L-glutamyl-tRNA(Gln) + L-glutamine + ATP + H2O = L-glutaminyl-tRNA(Gln) + L-glutamate + ADP + phosphate + H(+)</text>
        <dbReference type="Rhea" id="RHEA:17521"/>
        <dbReference type="Rhea" id="RHEA-COMP:9681"/>
        <dbReference type="Rhea" id="RHEA-COMP:9684"/>
        <dbReference type="ChEBI" id="CHEBI:15377"/>
        <dbReference type="ChEBI" id="CHEBI:15378"/>
        <dbReference type="ChEBI" id="CHEBI:29985"/>
        <dbReference type="ChEBI" id="CHEBI:30616"/>
        <dbReference type="ChEBI" id="CHEBI:43474"/>
        <dbReference type="ChEBI" id="CHEBI:58359"/>
        <dbReference type="ChEBI" id="CHEBI:78520"/>
        <dbReference type="ChEBI" id="CHEBI:78521"/>
        <dbReference type="ChEBI" id="CHEBI:456216"/>
        <dbReference type="EC" id="6.3.5.7"/>
    </reaction>
</comment>
<comment type="subunit">
    <text evidence="1">Heterotrimer of A, B and C subunits.</text>
</comment>
<comment type="similarity">
    <text evidence="1">Belongs to the amidase family. GatA subfamily.</text>
</comment>
<name>GATA_RICRS</name>
<keyword id="KW-0067">ATP-binding</keyword>
<keyword id="KW-0436">Ligase</keyword>
<keyword id="KW-0547">Nucleotide-binding</keyword>
<keyword id="KW-0648">Protein biosynthesis</keyword>
<accession>A8GQX7</accession>
<organism>
    <name type="scientific">Rickettsia rickettsii (strain Sheila Smith)</name>
    <dbReference type="NCBI Taxonomy" id="392021"/>
    <lineage>
        <taxon>Bacteria</taxon>
        <taxon>Pseudomonadati</taxon>
        <taxon>Pseudomonadota</taxon>
        <taxon>Alphaproteobacteria</taxon>
        <taxon>Rickettsiales</taxon>
        <taxon>Rickettsiaceae</taxon>
        <taxon>Rickettsieae</taxon>
        <taxon>Rickettsia</taxon>
        <taxon>spotted fever group</taxon>
    </lineage>
</organism>
<protein>
    <recommendedName>
        <fullName evidence="1">Glutamyl-tRNA(Gln) amidotransferase subunit A</fullName>
        <shortName evidence="1">Glu-ADT subunit A</shortName>
        <ecNumber evidence="1">6.3.5.7</ecNumber>
    </recommendedName>
</protein>
<evidence type="ECO:0000255" key="1">
    <source>
        <dbReference type="HAMAP-Rule" id="MF_00120"/>
    </source>
</evidence>
<reference key="1">
    <citation type="submission" date="2007-09" db="EMBL/GenBank/DDBJ databases">
        <title>Complete genome sequence of Rickettsia rickettsii.</title>
        <authorList>
            <person name="Madan A."/>
            <person name="Fahey J."/>
            <person name="Helton E."/>
            <person name="Ketteman M."/>
            <person name="Madan A."/>
            <person name="Rodrigues S."/>
            <person name="Sanchez A."/>
            <person name="Dasch G."/>
            <person name="Eremeeva M."/>
        </authorList>
    </citation>
    <scope>NUCLEOTIDE SEQUENCE [LARGE SCALE GENOMIC DNA]</scope>
    <source>
        <strain>Sheila Smith</strain>
    </source>
</reference>
<proteinExistence type="inferred from homology"/>
<sequence>MTELNKLTVADSIKGLKNKDFTSAELIGAHIKQIEKHRNLNAYVTETFDLALKQAEAADQNYAQNNARTLEGIPFAAKDLFCTKGIRTTACSNILKNFIPNYESSVTQNIFDKGGVMLGKTNMDEFAMGSANITSCFGNVISPWKANDDNADLVPGGSSGGSAAAVSGFMASAALGSDTGGSVRQPASFTGLVGFKPTYGRCSRYGMISFASSLDQAGIFTRSVLDSSIMLEAMMGFDEKDSTSIKAEVPELQSAIGSSMKNMKMGVPLSLGEGSIIEPDIMKMWQDTIELLKNAGAEIVDITLPHAKYGVAVYYVIAPAEASSNLSRYDGVRYGLRVERENMTLDEMYEMTRSTGFGEEVKRRIMIGTYVLSSSGMDAYYLKAQKVRRLVANDFNNAFAKVDAILLPTSPTAAFKIGEKQNDPTIMYLNDLFTIPASLAGLPCASVPAGLSARGLPLGIQIIGKQLDEYTVLKVASTIESGVKHIKFEPKGF</sequence>
<gene>
    <name evidence="1" type="primary">gatA</name>
    <name type="ordered locus">A1G_01100</name>
</gene>